<comment type="function">
    <text evidence="1 4">Receptor for bile acid. Bile acid-binding induces its internalization, activation of extracellular signal-regulated kinase and intracellular cAMP production. May be involved in the suppression of macrophage functions by bile acids (By similarity). Involved in bile acid promoted GLP1R secretion.</text>
</comment>
<comment type="subcellular location">
    <subcellularLocation>
        <location evidence="1">Cell membrane</location>
        <topology evidence="1">Multi-pass membrane protein</topology>
    </subcellularLocation>
</comment>
<comment type="similarity">
    <text evidence="3">Belongs to the G-protein coupled receptor 1 family.</text>
</comment>
<sequence>MMTPNSTELSAIPMGVLGLSLALASLIVIANLLLALGIALDRHLRSPPAGCFFLSLLLAGLLTGLALPMLPGLWSRNHQGYWSCLLLHLTPNFCFLSLLANLLLVHGERYMAVLQPLRPHGSVRLALFLTWVSSLFFASLPALGWNHWSPDANCSSQAVFPAPYLYLEVYGLLLPAVGATALLSVRVLATAHRQLCEIRRLERAVCRDVPSTLARALTWRQARAQAGATLLFLLCWGPYVATLLLSVLAYERRPPLGPGTLLSLISLGSTSAAAVPVAMGLGDQRYTAPWRTAAQRCLRVLRGRAKRDNPGPSTAYHTSSQCSIDLDLN</sequence>
<evidence type="ECO:0000250" key="1"/>
<evidence type="ECO:0000255" key="2"/>
<evidence type="ECO:0000255" key="3">
    <source>
        <dbReference type="PROSITE-ProRule" id="PRU00521"/>
    </source>
</evidence>
<evidence type="ECO:0000269" key="4">
    <source>
    </source>
</evidence>
<name>GPBAR_MOUSE</name>
<reference key="1">
    <citation type="journal article" date="2002" name="Biochem. Biophys. Res. Commun.">
        <title>Identification of membrane-type receptor for bile acids (M-BAR).</title>
        <authorList>
            <person name="Maruyama T."/>
            <person name="Miyamoto Y."/>
            <person name="Nakamura T."/>
            <person name="Tamai Y."/>
            <person name="Okada H."/>
            <person name="Sugiyama E."/>
            <person name="Nakamura T."/>
            <person name="Itadani H."/>
            <person name="Tanaka K."/>
        </authorList>
    </citation>
    <scope>NUCLEOTIDE SEQUENCE [MRNA]</scope>
</reference>
<reference key="2">
    <citation type="journal article" date="2003" name="J. Biol. Chem.">
        <title>A G protein-coupled receptor responsive to bile acids.</title>
        <authorList>
            <person name="Kawamata Y."/>
            <person name="Fujii R."/>
            <person name="Hosoya M."/>
            <person name="Harada M."/>
            <person name="Yoshida H."/>
            <person name="Miwa M."/>
            <person name="Fukusumi S."/>
            <person name="Habata Y."/>
            <person name="Itoh T."/>
            <person name="Shintani Y."/>
            <person name="Hinuma S."/>
            <person name="Fujisawa Y."/>
            <person name="Fujino M."/>
        </authorList>
    </citation>
    <scope>NUCLEOTIDE SEQUENCE [MRNA]</scope>
</reference>
<reference key="3">
    <citation type="journal article" date="2005" name="Biochem. Biophys. Res. Commun.">
        <title>Bile acids promote glucagon-like peptide-1 secretion through TGR5 in a murine enteroendocrine cell line STC-1.</title>
        <authorList>
            <person name="Katsuma S."/>
            <person name="Hirasawa A."/>
            <person name="Tsujimoto G."/>
        </authorList>
    </citation>
    <scope>FUNCTION</scope>
</reference>
<protein>
    <recommendedName>
        <fullName>G-protein coupled bile acid receptor 1</fullName>
    </recommendedName>
    <alternativeName>
        <fullName>Membrane-type receptor for bile acids</fullName>
        <shortName>M-BAR</shortName>
    </alternativeName>
</protein>
<proteinExistence type="evidence at transcript level"/>
<organism>
    <name type="scientific">Mus musculus</name>
    <name type="common">Mouse</name>
    <dbReference type="NCBI Taxonomy" id="10090"/>
    <lineage>
        <taxon>Eukaryota</taxon>
        <taxon>Metazoa</taxon>
        <taxon>Chordata</taxon>
        <taxon>Craniata</taxon>
        <taxon>Vertebrata</taxon>
        <taxon>Euteleostomi</taxon>
        <taxon>Mammalia</taxon>
        <taxon>Eutheria</taxon>
        <taxon>Euarchontoglires</taxon>
        <taxon>Glires</taxon>
        <taxon>Rodentia</taxon>
        <taxon>Myomorpha</taxon>
        <taxon>Muroidea</taxon>
        <taxon>Muridae</taxon>
        <taxon>Murinae</taxon>
        <taxon>Mus</taxon>
        <taxon>Mus</taxon>
    </lineage>
</organism>
<gene>
    <name type="primary">Gpbar1</name>
    <name type="synonym">Tgr5</name>
</gene>
<accession>Q80SS6</accession>
<dbReference type="EMBL" id="AB086171">
    <property type="protein sequence ID" value="BAC65344.1"/>
    <property type="molecule type" value="mRNA"/>
</dbReference>
<dbReference type="EMBL" id="AB089308">
    <property type="protein sequence ID" value="BAC55236.1"/>
    <property type="molecule type" value="mRNA"/>
</dbReference>
<dbReference type="CCDS" id="CCDS15042.1"/>
<dbReference type="RefSeq" id="NP_778150.1">
    <property type="nucleotide sequence ID" value="NM_174985.2"/>
</dbReference>
<dbReference type="SMR" id="Q80SS6"/>
<dbReference type="BioGRID" id="230608">
    <property type="interactions" value="3"/>
</dbReference>
<dbReference type="FunCoup" id="Q80SS6">
    <property type="interactions" value="232"/>
</dbReference>
<dbReference type="STRING" id="10090.ENSMUSP00000077135"/>
<dbReference type="BindingDB" id="Q80SS6"/>
<dbReference type="ChEMBL" id="CHEMBL1255150"/>
<dbReference type="GuidetoPHARMACOLOGY" id="37"/>
<dbReference type="GlyCosmos" id="Q80SS6">
    <property type="glycosylation" value="2 sites, No reported glycans"/>
</dbReference>
<dbReference type="GlyGen" id="Q80SS6">
    <property type="glycosylation" value="2 sites"/>
</dbReference>
<dbReference type="PhosphoSitePlus" id="Q80SS6"/>
<dbReference type="PaxDb" id="10090-ENSMUSP00000077135"/>
<dbReference type="Antibodypedia" id="34258">
    <property type="antibodies" value="301 antibodies from 31 providers"/>
</dbReference>
<dbReference type="DNASU" id="227289"/>
<dbReference type="Ensembl" id="ENSMUST00000077985.4">
    <property type="protein sequence ID" value="ENSMUSP00000077135.4"/>
    <property type="gene ID" value="ENSMUSG00000064272.4"/>
</dbReference>
<dbReference type="GeneID" id="227289"/>
<dbReference type="KEGG" id="mmu:227289"/>
<dbReference type="UCSC" id="uc007blq.1">
    <property type="organism name" value="mouse"/>
</dbReference>
<dbReference type="AGR" id="MGI:2653863"/>
<dbReference type="CTD" id="151306"/>
<dbReference type="MGI" id="MGI:2653863">
    <property type="gene designation" value="Gpbar1"/>
</dbReference>
<dbReference type="VEuPathDB" id="HostDB:ENSMUSG00000064272"/>
<dbReference type="eggNOG" id="ENOG502SQ0C">
    <property type="taxonomic scope" value="Eukaryota"/>
</dbReference>
<dbReference type="GeneTree" id="ENSGT00390000010256"/>
<dbReference type="HOGENOM" id="CLU_895831_0_0_1"/>
<dbReference type="InParanoid" id="Q80SS6"/>
<dbReference type="OMA" id="ACWVPYL"/>
<dbReference type="OrthoDB" id="8817982at2759"/>
<dbReference type="PhylomeDB" id="Q80SS6"/>
<dbReference type="TreeFam" id="TF333321"/>
<dbReference type="Reactome" id="R-MMU-373076">
    <property type="pathway name" value="Class A/1 (Rhodopsin-like receptors)"/>
</dbReference>
<dbReference type="Reactome" id="R-MMU-418555">
    <property type="pathway name" value="G alpha (s) signalling events"/>
</dbReference>
<dbReference type="BioGRID-ORCS" id="227289">
    <property type="hits" value="1 hit in 75 CRISPR screens"/>
</dbReference>
<dbReference type="PRO" id="PR:Q80SS6"/>
<dbReference type="Proteomes" id="UP000000589">
    <property type="component" value="Chromosome 1"/>
</dbReference>
<dbReference type="RNAct" id="Q80SS6">
    <property type="molecule type" value="protein"/>
</dbReference>
<dbReference type="Bgee" id="ENSMUSG00000064272">
    <property type="expression patterns" value="Expressed in mesodermal cell in embryo and 21 other cell types or tissues"/>
</dbReference>
<dbReference type="ExpressionAtlas" id="Q80SS6">
    <property type="expression patterns" value="baseline and differential"/>
</dbReference>
<dbReference type="GO" id="GO:0005737">
    <property type="term" value="C:cytoplasm"/>
    <property type="evidence" value="ECO:0007669"/>
    <property type="project" value="Ensembl"/>
</dbReference>
<dbReference type="GO" id="GO:0005886">
    <property type="term" value="C:plasma membrane"/>
    <property type="evidence" value="ECO:0007669"/>
    <property type="project" value="UniProtKB-SubCell"/>
</dbReference>
<dbReference type="GO" id="GO:0043235">
    <property type="term" value="C:receptor complex"/>
    <property type="evidence" value="ECO:0007669"/>
    <property type="project" value="Ensembl"/>
</dbReference>
<dbReference type="GO" id="GO:0038182">
    <property type="term" value="F:G protein-coupled bile acid receptor activity"/>
    <property type="evidence" value="ECO:0007669"/>
    <property type="project" value="Ensembl"/>
</dbReference>
<dbReference type="GO" id="GO:0004930">
    <property type="term" value="F:G protein-coupled receptor activity"/>
    <property type="evidence" value="ECO:0000266"/>
    <property type="project" value="MGI"/>
</dbReference>
<dbReference type="GO" id="GO:1903413">
    <property type="term" value="P:cellular response to bile acid"/>
    <property type="evidence" value="ECO:0007669"/>
    <property type="project" value="Ensembl"/>
</dbReference>
<dbReference type="GO" id="GO:1904056">
    <property type="term" value="P:positive regulation of cholangiocyte proliferation"/>
    <property type="evidence" value="ECO:0007669"/>
    <property type="project" value="Ensembl"/>
</dbReference>
<dbReference type="GO" id="GO:0070374">
    <property type="term" value="P:positive regulation of ERK1 and ERK2 cascade"/>
    <property type="evidence" value="ECO:0007669"/>
    <property type="project" value="Ensembl"/>
</dbReference>
<dbReference type="GO" id="GO:2000810">
    <property type="term" value="P:regulation of bicellular tight junction assembly"/>
    <property type="evidence" value="ECO:0000315"/>
    <property type="project" value="CACAO"/>
</dbReference>
<dbReference type="FunFam" id="1.20.1070.10:FF:000307">
    <property type="entry name" value="G-protein coupled bile acid receptor 1"/>
    <property type="match status" value="1"/>
</dbReference>
<dbReference type="Gene3D" id="1.20.1070.10">
    <property type="entry name" value="Rhodopsin 7-helix transmembrane proteins"/>
    <property type="match status" value="1"/>
</dbReference>
<dbReference type="InterPro" id="IPR000276">
    <property type="entry name" value="GPCR_Rhodpsn"/>
</dbReference>
<dbReference type="InterPro" id="IPR017452">
    <property type="entry name" value="GPCR_Rhodpsn_7TM"/>
</dbReference>
<dbReference type="PANTHER" id="PTHR24246:SF31">
    <property type="entry name" value="G-PROTEIN COUPLED BILE ACID RECEPTOR 1"/>
    <property type="match status" value="1"/>
</dbReference>
<dbReference type="PANTHER" id="PTHR24246">
    <property type="entry name" value="OLFACTORY RECEPTOR AND ADENOSINE RECEPTOR"/>
    <property type="match status" value="1"/>
</dbReference>
<dbReference type="Pfam" id="PF00001">
    <property type="entry name" value="7tm_1"/>
    <property type="match status" value="1"/>
</dbReference>
<dbReference type="PRINTS" id="PR00237">
    <property type="entry name" value="GPCRRHODOPSN"/>
</dbReference>
<dbReference type="SUPFAM" id="SSF81321">
    <property type="entry name" value="Family A G protein-coupled receptor-like"/>
    <property type="match status" value="1"/>
</dbReference>
<dbReference type="PROSITE" id="PS50262">
    <property type="entry name" value="G_PROTEIN_RECEP_F1_2"/>
    <property type="match status" value="1"/>
</dbReference>
<feature type="chain" id="PRO_0000069501" description="G-protein coupled bile acid receptor 1">
    <location>
        <begin position="1"/>
        <end position="329"/>
    </location>
</feature>
<feature type="topological domain" description="Extracellular" evidence="2">
    <location>
        <begin position="1"/>
        <end position="15"/>
    </location>
</feature>
<feature type="transmembrane region" description="Helical; Name=1" evidence="2">
    <location>
        <begin position="16"/>
        <end position="36"/>
    </location>
</feature>
<feature type="topological domain" description="Cytoplasmic" evidence="2">
    <location>
        <begin position="37"/>
        <end position="49"/>
    </location>
</feature>
<feature type="transmembrane region" description="Helical; Name=2" evidence="2">
    <location>
        <begin position="50"/>
        <end position="70"/>
    </location>
</feature>
<feature type="topological domain" description="Extracellular" evidence="2">
    <location>
        <begin position="71"/>
        <end position="84"/>
    </location>
</feature>
<feature type="transmembrane region" description="Helical; Name=3" evidence="2">
    <location>
        <begin position="85"/>
        <end position="105"/>
    </location>
</feature>
<feature type="topological domain" description="Cytoplasmic" evidence="2">
    <location>
        <begin position="106"/>
        <end position="124"/>
    </location>
</feature>
<feature type="transmembrane region" description="Helical; Name=4" evidence="2">
    <location>
        <begin position="125"/>
        <end position="145"/>
    </location>
</feature>
<feature type="topological domain" description="Extracellular" evidence="2">
    <location>
        <begin position="146"/>
        <end position="164"/>
    </location>
</feature>
<feature type="transmembrane region" description="Helical; Name=5" evidence="2">
    <location>
        <begin position="165"/>
        <end position="185"/>
    </location>
</feature>
<feature type="topological domain" description="Cytoplasmic" evidence="2">
    <location>
        <begin position="186"/>
        <end position="229"/>
    </location>
</feature>
<feature type="transmembrane region" description="Helical; Name=6" evidence="2">
    <location>
        <begin position="230"/>
        <end position="250"/>
    </location>
</feature>
<feature type="topological domain" description="Extracellular" evidence="2">
    <location>
        <begin position="251"/>
        <end position="260"/>
    </location>
</feature>
<feature type="transmembrane region" description="Helical; Name=7" evidence="2">
    <location>
        <begin position="261"/>
        <end position="281"/>
    </location>
</feature>
<feature type="topological domain" description="Cytoplasmic" evidence="2">
    <location>
        <begin position="282"/>
        <end position="329"/>
    </location>
</feature>
<feature type="glycosylation site" description="N-linked (GlcNAc...) asparagine" evidence="2">
    <location>
        <position position="5"/>
    </location>
</feature>
<feature type="glycosylation site" description="N-linked (GlcNAc...) asparagine" evidence="2">
    <location>
        <position position="153"/>
    </location>
</feature>
<feature type="disulfide bond" evidence="3">
    <location>
        <begin position="84"/>
        <end position="154"/>
    </location>
</feature>
<keyword id="KW-1003">Cell membrane</keyword>
<keyword id="KW-1015">Disulfide bond</keyword>
<keyword id="KW-0297">G-protein coupled receptor</keyword>
<keyword id="KW-0325">Glycoprotein</keyword>
<keyword id="KW-0472">Membrane</keyword>
<keyword id="KW-0675">Receptor</keyword>
<keyword id="KW-1185">Reference proteome</keyword>
<keyword id="KW-0807">Transducer</keyword>
<keyword id="KW-0812">Transmembrane</keyword>
<keyword id="KW-1133">Transmembrane helix</keyword>